<dbReference type="EC" id="6.1.1.20"/>
<dbReference type="EMBL" id="L43967">
    <property type="protein sequence ID" value="AAC71413.1"/>
    <property type="molecule type" value="Genomic_DNA"/>
</dbReference>
<dbReference type="EMBL" id="U01711">
    <property type="protein sequence ID" value="AAB01024.1"/>
    <property type="molecule type" value="Genomic_DNA"/>
</dbReference>
<dbReference type="EMBL" id="U02173">
    <property type="protein sequence ID" value="AAD12455.1"/>
    <property type="molecule type" value="Genomic_DNA"/>
</dbReference>
<dbReference type="PIR" id="E64221">
    <property type="entry name" value="E64221"/>
</dbReference>
<dbReference type="RefSeq" id="WP_009885736.1">
    <property type="nucleotide sequence ID" value="NC_000908.2"/>
</dbReference>
<dbReference type="SMR" id="P47437"/>
<dbReference type="FunCoup" id="P47437">
    <property type="interactions" value="202"/>
</dbReference>
<dbReference type="STRING" id="243273.MG_195"/>
<dbReference type="GeneID" id="88282327"/>
<dbReference type="KEGG" id="mge:MG_195"/>
<dbReference type="eggNOG" id="COG0072">
    <property type="taxonomic scope" value="Bacteria"/>
</dbReference>
<dbReference type="eggNOG" id="COG0073">
    <property type="taxonomic scope" value="Bacteria"/>
</dbReference>
<dbReference type="HOGENOM" id="CLU_016891_2_0_14"/>
<dbReference type="InParanoid" id="P47437"/>
<dbReference type="OrthoDB" id="9805455at2"/>
<dbReference type="BioCyc" id="MGEN243273:G1GJ2-227-MONOMER"/>
<dbReference type="Proteomes" id="UP000000807">
    <property type="component" value="Chromosome"/>
</dbReference>
<dbReference type="GO" id="GO:0009328">
    <property type="term" value="C:phenylalanine-tRNA ligase complex"/>
    <property type="evidence" value="ECO:0000318"/>
    <property type="project" value="GO_Central"/>
</dbReference>
<dbReference type="GO" id="GO:0005524">
    <property type="term" value="F:ATP binding"/>
    <property type="evidence" value="ECO:0007669"/>
    <property type="project" value="UniProtKB-UniRule"/>
</dbReference>
<dbReference type="GO" id="GO:0000287">
    <property type="term" value="F:magnesium ion binding"/>
    <property type="evidence" value="ECO:0007669"/>
    <property type="project" value="UniProtKB-UniRule"/>
</dbReference>
<dbReference type="GO" id="GO:0004826">
    <property type="term" value="F:phenylalanine-tRNA ligase activity"/>
    <property type="evidence" value="ECO:0007669"/>
    <property type="project" value="UniProtKB-UniRule"/>
</dbReference>
<dbReference type="GO" id="GO:0000049">
    <property type="term" value="F:tRNA binding"/>
    <property type="evidence" value="ECO:0007669"/>
    <property type="project" value="UniProtKB-KW"/>
</dbReference>
<dbReference type="GO" id="GO:0006432">
    <property type="term" value="P:phenylalanyl-tRNA aminoacylation"/>
    <property type="evidence" value="ECO:0000318"/>
    <property type="project" value="GO_Central"/>
</dbReference>
<dbReference type="CDD" id="cd00769">
    <property type="entry name" value="PheRS_beta_core"/>
    <property type="match status" value="1"/>
</dbReference>
<dbReference type="CDD" id="cd02796">
    <property type="entry name" value="tRNA_bind_bactPheRS"/>
    <property type="match status" value="1"/>
</dbReference>
<dbReference type="Gene3D" id="3.30.56.10">
    <property type="match status" value="2"/>
</dbReference>
<dbReference type="Gene3D" id="3.30.930.10">
    <property type="entry name" value="Bira Bifunctional Protein, Domain 2"/>
    <property type="match status" value="1"/>
</dbReference>
<dbReference type="Gene3D" id="2.40.50.140">
    <property type="entry name" value="Nucleic acid-binding proteins"/>
    <property type="match status" value="1"/>
</dbReference>
<dbReference type="Gene3D" id="3.50.40.10">
    <property type="entry name" value="Phenylalanyl-trna Synthetase, Chain B, domain 3"/>
    <property type="match status" value="1"/>
</dbReference>
<dbReference type="HAMAP" id="MF_00283">
    <property type="entry name" value="Phe_tRNA_synth_beta1"/>
    <property type="match status" value="1"/>
</dbReference>
<dbReference type="InterPro" id="IPR045864">
    <property type="entry name" value="aa-tRNA-synth_II/BPL/LPL"/>
</dbReference>
<dbReference type="InterPro" id="IPR005146">
    <property type="entry name" value="B3/B4_tRNA-bd"/>
</dbReference>
<dbReference type="InterPro" id="IPR009061">
    <property type="entry name" value="DNA-bd_dom_put_sf"/>
</dbReference>
<dbReference type="InterPro" id="IPR012340">
    <property type="entry name" value="NA-bd_OB-fold"/>
</dbReference>
<dbReference type="InterPro" id="IPR045060">
    <property type="entry name" value="Phe-tRNA-ligase_IIc_bsu"/>
</dbReference>
<dbReference type="InterPro" id="IPR004532">
    <property type="entry name" value="Phe-tRNA-ligase_IIc_bsu_bact"/>
</dbReference>
<dbReference type="InterPro" id="IPR020825">
    <property type="entry name" value="Phe-tRNA_synthase-like_B3/B4"/>
</dbReference>
<dbReference type="InterPro" id="IPR041616">
    <property type="entry name" value="PheRS_beta_core"/>
</dbReference>
<dbReference type="InterPro" id="IPR002547">
    <property type="entry name" value="tRNA-bd_dom"/>
</dbReference>
<dbReference type="InterPro" id="IPR033714">
    <property type="entry name" value="tRNA_bind_bactPheRS"/>
</dbReference>
<dbReference type="InterPro" id="IPR005147">
    <property type="entry name" value="tRNA_synthase_B5-dom"/>
</dbReference>
<dbReference type="NCBIfam" id="TIGR00472">
    <property type="entry name" value="pheT_bact"/>
    <property type="match status" value="1"/>
</dbReference>
<dbReference type="PANTHER" id="PTHR10947:SF0">
    <property type="entry name" value="PHENYLALANINE--TRNA LIGASE BETA SUBUNIT"/>
    <property type="match status" value="1"/>
</dbReference>
<dbReference type="PANTHER" id="PTHR10947">
    <property type="entry name" value="PHENYLALANYL-TRNA SYNTHETASE BETA CHAIN AND LEUCINE-RICH REPEAT-CONTAINING PROTEIN 47"/>
    <property type="match status" value="1"/>
</dbReference>
<dbReference type="Pfam" id="PF03483">
    <property type="entry name" value="B3_4"/>
    <property type="match status" value="1"/>
</dbReference>
<dbReference type="Pfam" id="PF03484">
    <property type="entry name" value="B5"/>
    <property type="match status" value="1"/>
</dbReference>
<dbReference type="Pfam" id="PF01588">
    <property type="entry name" value="tRNA_bind"/>
    <property type="match status" value="1"/>
</dbReference>
<dbReference type="Pfam" id="PF17759">
    <property type="entry name" value="tRNA_synthFbeta"/>
    <property type="match status" value="1"/>
</dbReference>
<dbReference type="SMART" id="SM00873">
    <property type="entry name" value="B3_4"/>
    <property type="match status" value="1"/>
</dbReference>
<dbReference type="SMART" id="SM00874">
    <property type="entry name" value="B5"/>
    <property type="match status" value="1"/>
</dbReference>
<dbReference type="SUPFAM" id="SSF55681">
    <property type="entry name" value="Class II aaRS and biotin synthetases"/>
    <property type="match status" value="1"/>
</dbReference>
<dbReference type="SUPFAM" id="SSF50249">
    <property type="entry name" value="Nucleic acid-binding proteins"/>
    <property type="match status" value="1"/>
</dbReference>
<dbReference type="SUPFAM" id="SSF56037">
    <property type="entry name" value="PheT/TilS domain"/>
    <property type="match status" value="1"/>
</dbReference>
<dbReference type="SUPFAM" id="SSF46955">
    <property type="entry name" value="Putative DNA-binding domain"/>
    <property type="match status" value="1"/>
</dbReference>
<dbReference type="PROSITE" id="PS51483">
    <property type="entry name" value="B5"/>
    <property type="match status" value="1"/>
</dbReference>
<dbReference type="PROSITE" id="PS50886">
    <property type="entry name" value="TRBD"/>
    <property type="match status" value="1"/>
</dbReference>
<reference key="1">
    <citation type="journal article" date="1995" name="Science">
        <title>The minimal gene complement of Mycoplasma genitalium.</title>
        <authorList>
            <person name="Fraser C.M."/>
            <person name="Gocayne J.D."/>
            <person name="White O."/>
            <person name="Adams M.D."/>
            <person name="Clayton R.A."/>
            <person name="Fleischmann R.D."/>
            <person name="Bult C.J."/>
            <person name="Kerlavage A.R."/>
            <person name="Sutton G.G."/>
            <person name="Kelley J.M."/>
            <person name="Fritchman J.L."/>
            <person name="Weidman J.F."/>
            <person name="Small K.V."/>
            <person name="Sandusky M."/>
            <person name="Fuhrmann J.L."/>
            <person name="Nguyen D.T."/>
            <person name="Utterback T.R."/>
            <person name="Saudek D.M."/>
            <person name="Phillips C.A."/>
            <person name="Merrick J.M."/>
            <person name="Tomb J.-F."/>
            <person name="Dougherty B.A."/>
            <person name="Bott K.F."/>
            <person name="Hu P.-C."/>
            <person name="Lucier T.S."/>
            <person name="Peterson S.N."/>
            <person name="Smith H.O."/>
            <person name="Hutchison C.A. III"/>
            <person name="Venter J.C."/>
        </authorList>
    </citation>
    <scope>NUCLEOTIDE SEQUENCE [LARGE SCALE GENOMIC DNA]</scope>
    <source>
        <strain>ATCC 33530 / DSM 19775 / NCTC 10195 / G37</strain>
    </source>
</reference>
<reference key="2">
    <citation type="journal article" date="1993" name="J. Bacteriol.">
        <title>A survey of the Mycoplasma genitalium genome by using random sequencing.</title>
        <authorList>
            <person name="Peterson S.N."/>
            <person name="Hu P.-C."/>
            <person name="Bott K.F."/>
            <person name="Hutchison C.A. III"/>
        </authorList>
    </citation>
    <scope>NUCLEOTIDE SEQUENCE [GENOMIC DNA] OF 1-94 AND 682-798</scope>
    <source>
        <strain>ATCC 33530 / DSM 19775 / NCTC 10195 / G37</strain>
    </source>
</reference>
<feature type="chain" id="PRO_0000126912" description="Phenylalanine--tRNA ligase beta subunit">
    <location>
        <begin position="1"/>
        <end position="806"/>
    </location>
</feature>
<feature type="domain" description="tRNA-binding">
    <location>
        <begin position="40"/>
        <end position="153"/>
    </location>
</feature>
<feature type="domain" description="B5">
    <location>
        <begin position="413"/>
        <end position="487"/>
    </location>
</feature>
<feature type="binding site" evidence="1">
    <location>
        <position position="465"/>
    </location>
    <ligand>
        <name>Mg(2+)</name>
        <dbReference type="ChEBI" id="CHEBI:18420"/>
        <note>shared with alpha subunit</note>
    </ligand>
</feature>
<feature type="binding site" evidence="1">
    <location>
        <position position="471"/>
    </location>
    <ligand>
        <name>Mg(2+)</name>
        <dbReference type="ChEBI" id="CHEBI:18420"/>
        <note>shared with alpha subunit</note>
    </ligand>
</feature>
<feature type="binding site" evidence="1">
    <location>
        <position position="474"/>
    </location>
    <ligand>
        <name>Mg(2+)</name>
        <dbReference type="ChEBI" id="CHEBI:18420"/>
        <note>shared with alpha subunit</note>
    </ligand>
</feature>
<feature type="binding site" evidence="1">
    <location>
        <position position="475"/>
    </location>
    <ligand>
        <name>Mg(2+)</name>
        <dbReference type="ChEBI" id="CHEBI:18420"/>
        <note>shared with alpha subunit</note>
    </ligand>
</feature>
<feature type="sequence conflict" description="In Ref. 2." evidence="2" ref="2">
    <original>NANNINNPDNINKF</original>
    <variation>MLITLTILYIHSCL</variation>
    <location>
        <begin position="81"/>
        <end position="94"/>
    </location>
</feature>
<evidence type="ECO:0000250" key="1"/>
<evidence type="ECO:0000305" key="2"/>
<proteinExistence type="inferred from homology"/>
<gene>
    <name type="primary">pheT</name>
    <name type="ordered locus">MG195</name>
</gene>
<protein>
    <recommendedName>
        <fullName>Phenylalanine--tRNA ligase beta subunit</fullName>
        <ecNumber>6.1.1.20</ecNumber>
    </recommendedName>
    <alternativeName>
        <fullName>Phenylalanyl-tRNA synthetase beta subunit</fullName>
        <shortName>PheRS</shortName>
    </alternativeName>
</protein>
<sequence length="806" mass="92133">MLISKKTLGVLIPDIFSFSNDQIAQKLEQMGIEVESIKQFNSPDYLQLAKVVSIQPHPHDNKLFICELQIDKNKFINVVSNANNINNPDNINKFVIVAKKGTELLNGLIVKTQNIKGIISEGILCSYIDINPFSRQIIEKTEVADAIIIDHVSNDHDWNQYLSFLSLDDVIFDVKTPTNRADLHSLIFLAKELGVLLKTKTFLKQKSSVVNHDFFKFPLNLKNKLKANYFGGLFLRQINQHSSPWTVKGLLINQMIKPVNYYVDKANLVTVFTAQPIHCHDADRIVGNIELKQATHNETFVGLDDKQYEIEPGDIVVCDEKGIIALVGIIGSKRTMVQPTTTNIFFEVVNCNSETIKQTAKRFLINNFASKFMVKPISLLATDNCLNYLQNSLLTTDNIGKISHFSSSLKVEPFSKKLTVNFHKIRQLIGIEKKELTDQTIKKSLSQLGFKVDNQLLKIPSYRQDINTWQDISEEIVKLIDINKLKPIGITSSFNFEKSSYFNTFNALTKLRKKLQTLGFHNVITYQLTDQKSAKTFNLFNLENFITIKNPVSQNHSVMRVSLIDSLLKVLKTNNNYKNELVNIFEFSFIKTQNNSELHLAVLWVEKLFTSSFNPMQGISNDVFTMKGLAKLIVANLGFSCDFEPLDDSDYFVNNQSLKIVVFNEQIGFIGLIKESLLNNYDLNNKPIYCLEINLDRMLSSLNRIEKNYLGYSKLQPVCKDLTFSFTNPASHFDQFANMIKRITGIESWKLISVFETMQNNQLITKYTVRYFLKNDANKPLTNQTIELITNNLKLQCEKLKIKLDI</sequence>
<name>SYFB_MYCGE</name>
<keyword id="KW-0030">Aminoacyl-tRNA synthetase</keyword>
<keyword id="KW-0067">ATP-binding</keyword>
<keyword id="KW-0963">Cytoplasm</keyword>
<keyword id="KW-0436">Ligase</keyword>
<keyword id="KW-0460">Magnesium</keyword>
<keyword id="KW-0479">Metal-binding</keyword>
<keyword id="KW-0547">Nucleotide-binding</keyword>
<keyword id="KW-0648">Protein biosynthesis</keyword>
<keyword id="KW-1185">Reference proteome</keyword>
<keyword id="KW-0694">RNA-binding</keyword>
<keyword id="KW-0820">tRNA-binding</keyword>
<organism>
    <name type="scientific">Mycoplasma genitalium (strain ATCC 33530 / DSM 19775 / NCTC 10195 / G37)</name>
    <name type="common">Mycoplasmoides genitalium</name>
    <dbReference type="NCBI Taxonomy" id="243273"/>
    <lineage>
        <taxon>Bacteria</taxon>
        <taxon>Bacillati</taxon>
        <taxon>Mycoplasmatota</taxon>
        <taxon>Mycoplasmoidales</taxon>
        <taxon>Mycoplasmoidaceae</taxon>
        <taxon>Mycoplasmoides</taxon>
    </lineage>
</organism>
<comment type="catalytic activity">
    <reaction>
        <text>tRNA(Phe) + L-phenylalanine + ATP = L-phenylalanyl-tRNA(Phe) + AMP + diphosphate + H(+)</text>
        <dbReference type="Rhea" id="RHEA:19413"/>
        <dbReference type="Rhea" id="RHEA-COMP:9668"/>
        <dbReference type="Rhea" id="RHEA-COMP:9699"/>
        <dbReference type="ChEBI" id="CHEBI:15378"/>
        <dbReference type="ChEBI" id="CHEBI:30616"/>
        <dbReference type="ChEBI" id="CHEBI:33019"/>
        <dbReference type="ChEBI" id="CHEBI:58095"/>
        <dbReference type="ChEBI" id="CHEBI:78442"/>
        <dbReference type="ChEBI" id="CHEBI:78531"/>
        <dbReference type="ChEBI" id="CHEBI:456215"/>
        <dbReference type="EC" id="6.1.1.20"/>
    </reaction>
</comment>
<comment type="cofactor">
    <cofactor evidence="1">
        <name>Mg(2+)</name>
        <dbReference type="ChEBI" id="CHEBI:18420"/>
    </cofactor>
    <text evidence="1">Binds 2 magnesium ions per tetramer.</text>
</comment>
<comment type="subunit">
    <text evidence="1">Tetramer of two alpha and two beta subunits.</text>
</comment>
<comment type="subcellular location">
    <subcellularLocation>
        <location evidence="1">Cytoplasm</location>
    </subcellularLocation>
</comment>
<comment type="similarity">
    <text evidence="2">Belongs to the phenylalanyl-tRNA synthetase beta subunit family. Type 1 subfamily.</text>
</comment>
<accession>P47437</accession>
<accession>Q49516</accession>